<comment type="function">
    <text evidence="1">Cell division factor that enhances FtsZ-ring assembly. Directly interacts with FtsZ and promotes bundling of FtsZ protofilaments, with a reduction in FtsZ GTPase activity.</text>
</comment>
<comment type="subunit">
    <text evidence="1">Interacts with FtsZ.</text>
</comment>
<comment type="subcellular location">
    <subcellularLocation>
        <location evidence="1">Cytoplasm</location>
    </subcellularLocation>
    <text evidence="1">Localizes to mid-cell in an FtsZ-dependent manner.</text>
</comment>
<comment type="similarity">
    <text evidence="1">Belongs to the ZapD family.</text>
</comment>
<feature type="chain" id="PRO_1000064895" description="Cell division protein ZapD">
    <location>
        <begin position="1"/>
        <end position="251"/>
    </location>
</feature>
<gene>
    <name evidence="1" type="primary">zapD</name>
    <name type="ordered locus">BMA10229_A1315</name>
</gene>
<proteinExistence type="inferred from homology"/>
<sequence>MILYEYPFNERIRTLLRLEDLFERFTFFVAQEDAREHHVALTTLFEISEVAGRADLKSDLMKELERQRQTLAPFRGNPGIEQNALEAVLGEIEQTLANLAQMQGKTGQHLIDNEWLASIRSRAVIPGGTCKFDLPSYYAWQQWPAEQRRHDIAKWAMPLLPLRDAAMIVLRLARESGQASKVMAMQGSYQQMLSGRTYQLMQVRVPPELRVIPEASANKYMLWVRFTAQDGDVRPRAVDIDVPFQLTLCNL</sequence>
<organism>
    <name type="scientific">Burkholderia mallei (strain NCTC 10229)</name>
    <dbReference type="NCBI Taxonomy" id="412022"/>
    <lineage>
        <taxon>Bacteria</taxon>
        <taxon>Pseudomonadati</taxon>
        <taxon>Pseudomonadota</taxon>
        <taxon>Betaproteobacteria</taxon>
        <taxon>Burkholderiales</taxon>
        <taxon>Burkholderiaceae</taxon>
        <taxon>Burkholderia</taxon>
        <taxon>pseudomallei group</taxon>
    </lineage>
</organism>
<name>ZAPD_BURM9</name>
<keyword id="KW-0131">Cell cycle</keyword>
<keyword id="KW-0132">Cell division</keyword>
<keyword id="KW-0963">Cytoplasm</keyword>
<keyword id="KW-0717">Septation</keyword>
<reference key="1">
    <citation type="journal article" date="2010" name="Genome Biol. Evol.">
        <title>Continuing evolution of Burkholderia mallei through genome reduction and large-scale rearrangements.</title>
        <authorList>
            <person name="Losada L."/>
            <person name="Ronning C.M."/>
            <person name="DeShazer D."/>
            <person name="Woods D."/>
            <person name="Fedorova N."/>
            <person name="Kim H.S."/>
            <person name="Shabalina S.A."/>
            <person name="Pearson T.R."/>
            <person name="Brinkac L."/>
            <person name="Tan P."/>
            <person name="Nandi T."/>
            <person name="Crabtree J."/>
            <person name="Badger J."/>
            <person name="Beckstrom-Sternberg S."/>
            <person name="Saqib M."/>
            <person name="Schutzer S.E."/>
            <person name="Keim P."/>
            <person name="Nierman W.C."/>
        </authorList>
    </citation>
    <scope>NUCLEOTIDE SEQUENCE [LARGE SCALE GENOMIC DNA]</scope>
    <source>
        <strain>NCTC 10229</strain>
    </source>
</reference>
<accession>A2S5S9</accession>
<dbReference type="EMBL" id="CP000546">
    <property type="protein sequence ID" value="ABN02636.1"/>
    <property type="molecule type" value="Genomic_DNA"/>
</dbReference>
<dbReference type="RefSeq" id="WP_004195118.1">
    <property type="nucleotide sequence ID" value="NC_008836.1"/>
</dbReference>
<dbReference type="SMR" id="A2S5S9"/>
<dbReference type="GeneID" id="93061613"/>
<dbReference type="KEGG" id="bml:BMA10229_A1315"/>
<dbReference type="HOGENOM" id="CLU_076303_0_1_4"/>
<dbReference type="Proteomes" id="UP000002283">
    <property type="component" value="Chromosome I"/>
</dbReference>
<dbReference type="GO" id="GO:0032153">
    <property type="term" value="C:cell division site"/>
    <property type="evidence" value="ECO:0007669"/>
    <property type="project" value="TreeGrafter"/>
</dbReference>
<dbReference type="GO" id="GO:0005737">
    <property type="term" value="C:cytoplasm"/>
    <property type="evidence" value="ECO:0007669"/>
    <property type="project" value="UniProtKB-SubCell"/>
</dbReference>
<dbReference type="GO" id="GO:0000917">
    <property type="term" value="P:division septum assembly"/>
    <property type="evidence" value="ECO:0007669"/>
    <property type="project" value="UniProtKB-KW"/>
</dbReference>
<dbReference type="GO" id="GO:0043093">
    <property type="term" value="P:FtsZ-dependent cytokinesis"/>
    <property type="evidence" value="ECO:0007669"/>
    <property type="project" value="UniProtKB-UniRule"/>
</dbReference>
<dbReference type="Gene3D" id="1.10.3900.10">
    <property type="entry name" value="YacF-like"/>
    <property type="match status" value="1"/>
</dbReference>
<dbReference type="Gene3D" id="2.60.440.10">
    <property type="entry name" value="YacF-like domains"/>
    <property type="match status" value="1"/>
</dbReference>
<dbReference type="HAMAP" id="MF_01092">
    <property type="entry name" value="ZapD"/>
    <property type="match status" value="1"/>
</dbReference>
<dbReference type="InterPro" id="IPR009777">
    <property type="entry name" value="ZapD"/>
</dbReference>
<dbReference type="InterPro" id="IPR027462">
    <property type="entry name" value="ZapD_C"/>
</dbReference>
<dbReference type="InterPro" id="IPR036268">
    <property type="entry name" value="ZapD_sf"/>
</dbReference>
<dbReference type="NCBIfam" id="NF003656">
    <property type="entry name" value="PRK05287.1-4"/>
    <property type="match status" value="1"/>
</dbReference>
<dbReference type="PANTHER" id="PTHR39455">
    <property type="entry name" value="CELL DIVISION PROTEIN ZAPD"/>
    <property type="match status" value="1"/>
</dbReference>
<dbReference type="PANTHER" id="PTHR39455:SF1">
    <property type="entry name" value="CELL DIVISION PROTEIN ZAPD"/>
    <property type="match status" value="1"/>
</dbReference>
<dbReference type="Pfam" id="PF07072">
    <property type="entry name" value="ZapD"/>
    <property type="match status" value="1"/>
</dbReference>
<dbReference type="SUPFAM" id="SSF160950">
    <property type="entry name" value="YacF-like"/>
    <property type="match status" value="1"/>
</dbReference>
<evidence type="ECO:0000255" key="1">
    <source>
        <dbReference type="HAMAP-Rule" id="MF_01092"/>
    </source>
</evidence>
<protein>
    <recommendedName>
        <fullName evidence="1">Cell division protein ZapD</fullName>
    </recommendedName>
    <alternativeName>
        <fullName evidence="1">Z ring-associated protein D</fullName>
    </alternativeName>
</protein>